<gene>
    <name type="primary">vpx</name>
</gene>
<protein>
    <recommendedName>
        <fullName>Protein Vpx</fullName>
    </recommendedName>
    <alternativeName>
        <fullName>Viral protein X</fullName>
    </alternativeName>
    <alternativeName>
        <fullName>X ORF protein</fullName>
    </alternativeName>
</protein>
<sequence>MSDPRERIPPGNSGEETIGEAFDWLDRTVEEINRAAVNHLPRELIFQVWRRSWEYWHDEMGMSVSYTKYRYLCLIQKAMFMHCKKGCRCLGGEHGAGGWRPGPPPPPPPGLA</sequence>
<organism>
    <name type="scientific">Simian immunodeficiency virus (isolate PBj14/BCL-3)</name>
    <name type="common">SIV-sm</name>
    <name type="synonym">Simian immunodeficiency virus sooty mangabey monkey</name>
    <dbReference type="NCBI Taxonomy" id="11738"/>
    <lineage>
        <taxon>Viruses</taxon>
        <taxon>Riboviria</taxon>
        <taxon>Pararnavirae</taxon>
        <taxon>Artverviricota</taxon>
        <taxon>Revtraviricetes</taxon>
        <taxon>Ortervirales</taxon>
        <taxon>Retroviridae</taxon>
        <taxon>Orthoretrovirinae</taxon>
        <taxon>Lentivirus</taxon>
        <taxon>Simian immunodeficiency virus</taxon>
    </lineage>
</organism>
<feature type="chain" id="PRO_0000085407" description="Protein Vpx">
    <location>
        <begin position="1"/>
        <end position="112"/>
    </location>
</feature>
<feature type="short sequence motif" description="Nuclear localization signal" evidence="1">
    <location>
        <begin position="65"/>
        <end position="72"/>
    </location>
</feature>
<feature type="binding site" evidence="3">
    <location>
        <position position="39"/>
    </location>
    <ligand>
        <name>Zn(2+)</name>
        <dbReference type="ChEBI" id="CHEBI:29105"/>
    </ligand>
</feature>
<feature type="binding site" evidence="3">
    <location>
        <position position="82"/>
    </location>
    <ligand>
        <name>Zn(2+)</name>
        <dbReference type="ChEBI" id="CHEBI:29105"/>
    </ligand>
</feature>
<feature type="binding site" evidence="3">
    <location>
        <position position="87"/>
    </location>
    <ligand>
        <name>Zn(2+)</name>
        <dbReference type="ChEBI" id="CHEBI:29105"/>
    </ligand>
</feature>
<feature type="binding site" evidence="3">
    <location>
        <position position="89"/>
    </location>
    <ligand>
        <name>Zn(2+)</name>
        <dbReference type="ChEBI" id="CHEBI:29105"/>
    </ligand>
</feature>
<feature type="helix" evidence="5">
    <location>
        <begin position="13"/>
        <end position="15"/>
    </location>
</feature>
<feature type="helix" evidence="5">
    <location>
        <begin position="18"/>
        <end position="36"/>
    </location>
</feature>
<feature type="turn" evidence="5">
    <location>
        <begin position="37"/>
        <end position="39"/>
    </location>
</feature>
<feature type="helix" evidence="5">
    <location>
        <begin position="42"/>
        <end position="56"/>
    </location>
</feature>
<feature type="turn" evidence="5">
    <location>
        <begin position="57"/>
        <end position="60"/>
    </location>
</feature>
<feature type="helix" evidence="5">
    <location>
        <begin position="64"/>
        <end position="84"/>
    </location>
</feature>
<name>VPX_SIVSP</name>
<proteinExistence type="evidence at protein level"/>
<comment type="function">
    <text evidence="2 3">Plays a role in nuclear translocation of the viral pre-integration complex (PIC), thus is required for the virus to infect non-dividing cells. Targets specific host proteins for degradation by the 26S proteasome. Acts by associating with the cellular CUL4A-DDB1 E3 ligase complex through direct interaction with host VPRPB/DCAF-1. This change in the E3 ligase substrate specificity results in the degradation of host SAMHD1. In turn, SAMHD1 depletion allows viral replication in host myeloid cells by preventing SAMHD1-mediated hydrolysis of intracellular dNTPs necessary for reverse transcription.</text>
</comment>
<comment type="subunit">
    <text evidence="2 3">Interacts with the P6 region of unprocessed GAG. Interacts with host VPRBP/DCAF1, leading to change substrate specificity of the CUL4A-DDB1 E3 ligase complex.</text>
</comment>
<comment type="interaction">
    <interactant intactId="EBI-6558117">
        <id>P19508</id>
    </interactant>
    <interactant intactId="EBI-1996353">
        <id>Q9Y4B6</id>
        <label>DCAF1</label>
    </interactant>
    <organismsDiffer>true</organismsDiffer>
    <experiments>4</experiments>
</comment>
<comment type="subcellular location">
    <subcellularLocation>
        <location>Virion</location>
    </subcellularLocation>
    <subcellularLocation>
        <location>Host nucleus</location>
    </subcellularLocation>
    <text evidence="1">Nuclear just after virion uncoating, or if expressed in the absence of unprocessed GAG.</text>
</comment>
<comment type="similarity">
    <text evidence="4">Belongs to the lentivirus VPX protein family.</text>
</comment>
<keyword id="KW-0002">3D-structure</keyword>
<keyword id="KW-1048">Host nucleus</keyword>
<keyword id="KW-0945">Host-virus interaction</keyword>
<keyword id="KW-1090">Inhibition of host innate immune response by virus</keyword>
<keyword id="KW-0479">Metal-binding</keyword>
<keyword id="KW-0899">Viral immunoevasion</keyword>
<keyword id="KW-0946">Virion</keyword>
<keyword id="KW-0862">Zinc</keyword>
<evidence type="ECO:0000250" key="1"/>
<evidence type="ECO:0000269" key="2">
    <source>
    </source>
</evidence>
<evidence type="ECO:0000269" key="3">
    <source>
    </source>
</evidence>
<evidence type="ECO:0000305" key="4"/>
<evidence type="ECO:0007829" key="5">
    <source>
        <dbReference type="PDB" id="4CC9"/>
    </source>
</evidence>
<organismHost>
    <name type="scientific">Cercopithecidae</name>
    <name type="common">Old World monkeys</name>
    <dbReference type="NCBI Taxonomy" id="9527"/>
</organismHost>
<dbReference type="EMBL" id="L03298">
    <property type="protein sequence ID" value="AAA47779.1"/>
    <property type="molecule type" value="Genomic_RNA"/>
</dbReference>
<dbReference type="EMBL" id="M31325">
    <property type="protein sequence ID" value="AAA47755.1"/>
    <property type="molecule type" value="Genomic_RNA"/>
</dbReference>
<dbReference type="PDB" id="4CC9">
    <property type="method" value="X-ray"/>
    <property type="resolution" value="2.47 A"/>
    <property type="chains" value="B=1-112"/>
</dbReference>
<dbReference type="PDBsum" id="4CC9"/>
<dbReference type="SMR" id="P19508"/>
<dbReference type="DIP" id="DIP-60689N"/>
<dbReference type="IntAct" id="P19508">
    <property type="interactions" value="1"/>
</dbReference>
<dbReference type="EvolutionaryTrace" id="P19508"/>
<dbReference type="Proteomes" id="UP000007221">
    <property type="component" value="Segment"/>
</dbReference>
<dbReference type="GO" id="GO:0042025">
    <property type="term" value="C:host cell nucleus"/>
    <property type="evidence" value="ECO:0007669"/>
    <property type="project" value="UniProtKB-SubCell"/>
</dbReference>
<dbReference type="GO" id="GO:0044423">
    <property type="term" value="C:virion component"/>
    <property type="evidence" value="ECO:0007669"/>
    <property type="project" value="UniProtKB-KW"/>
</dbReference>
<dbReference type="GO" id="GO:0046872">
    <property type="term" value="F:metal ion binding"/>
    <property type="evidence" value="ECO:0007669"/>
    <property type="project" value="UniProtKB-KW"/>
</dbReference>
<dbReference type="GO" id="GO:0052170">
    <property type="term" value="P:symbiont-mediated suppression of host innate immune response"/>
    <property type="evidence" value="ECO:0007669"/>
    <property type="project" value="UniProtKB-KW"/>
</dbReference>
<dbReference type="GO" id="GO:0019058">
    <property type="term" value="P:viral life cycle"/>
    <property type="evidence" value="ECO:0007669"/>
    <property type="project" value="InterPro"/>
</dbReference>
<dbReference type="Gene3D" id="1.20.5.4730">
    <property type="match status" value="1"/>
</dbReference>
<dbReference type="IDEAL" id="IID90030"/>
<dbReference type="InterPro" id="IPR053711">
    <property type="entry name" value="Lentiviral_Vpx_assoc_factor"/>
</dbReference>
<dbReference type="InterPro" id="IPR000012">
    <property type="entry name" value="RetroV_VpR/X"/>
</dbReference>
<dbReference type="Pfam" id="PF00522">
    <property type="entry name" value="VPR"/>
    <property type="match status" value="1"/>
</dbReference>
<accession>P19508</accession>
<reference key="1">
    <citation type="journal article" date="1990" name="Nature">
        <title>Sequence analysis and acute pathogenicity of molecularly cloned SIVSMM-PBj14.</title>
        <authorList>
            <person name="Dewhurst S."/>
            <person name="Embretson J.E."/>
            <person name="Anderson D.C."/>
            <person name="Mullins J.I."/>
            <person name="Fultz P.N."/>
        </authorList>
    </citation>
    <scope>NUCLEOTIDE SEQUENCE [GENOMIC RNA]</scope>
</reference>
<reference key="2">
    <citation type="journal article" date="1992" name="AIDS Res. Hum. Retroviruses">
        <title>Molecular clones from a non-acutely pathogenic derivative of SIVsmmPBj14: characterization and comparison to acutely pathogenic clones.</title>
        <authorList>
            <person name="Dewhurst S."/>
            <person name="Embretson J.E."/>
            <person name="Fultz P.N."/>
            <person name="Mullins J.I."/>
        </authorList>
    </citation>
    <scope>NUCLEOTIDE SEQUENCE [GENOMIC RNA]</scope>
</reference>
<reference key="3">
    <citation type="journal article" date="2009" name="J. Virol.">
        <title>The human immunodeficiency virus type 2 Vpx protein usurps the CUL4A-DDB1 DCAF1 ubiquitin ligase to overcome a postentry block in macrophage infection.</title>
        <authorList>
            <person name="Bergamaschi A."/>
            <person name="Ayinde D."/>
            <person name="David A."/>
            <person name="Le Rouzic E."/>
            <person name="Morel M."/>
            <person name="Collin G."/>
            <person name="Descamps D."/>
            <person name="Damond F."/>
            <person name="Brun-Vezinet F."/>
            <person name="Nisole S."/>
            <person name="Margottin-Goguet F."/>
            <person name="Pancino G."/>
            <person name="Transy C."/>
        </authorList>
    </citation>
    <scope>FUNCTION</scope>
    <scope>INTERACTION WITH HUMAN DCAF1</scope>
    <source>
        <strain>Isolate GH-1</strain>
    </source>
</reference>
<reference key="4">
    <citation type="journal article" date="2014" name="Nature">
        <title>Structural basis of lentiviral subversion of a cellular protein degradation pathway.</title>
        <authorList>
            <person name="Schwefel D."/>
            <person name="Groom H.C."/>
            <person name="Boucherit V.C."/>
            <person name="Christodoulou E."/>
            <person name="Walker P.A."/>
            <person name="Stoye J.P."/>
            <person name="Bishop K.N."/>
            <person name="Taylor I.A."/>
        </authorList>
    </citation>
    <scope>X-RAY CRYSTALLOGRAPHY (2.47 ANGSTROMS) IN COMPLEX WITH ZINC; HUMAN SAMHD1 AND DCAF1</scope>
    <scope>FUNCTION</scope>
    <scope>INTERACTION WITH HUMAN SAMHD1 AND DCAF1</scope>
</reference>